<keyword id="KW-0694">RNA-binding</keyword>
<keyword id="KW-0804">Transcription</keyword>
<keyword id="KW-0889">Transcription antitermination</keyword>
<keyword id="KW-0805">Transcription regulation</keyword>
<gene>
    <name evidence="1" type="primary">nusB</name>
    <name type="ordered locus">CLM_2103</name>
</gene>
<comment type="function">
    <text evidence="1">Involved in transcription antitermination. Required for transcription of ribosomal RNA (rRNA) genes. Binds specifically to the boxA antiterminator sequence of the ribosomal RNA (rrn) operons.</text>
</comment>
<comment type="similarity">
    <text evidence="1">Belongs to the NusB family.</text>
</comment>
<feature type="chain" id="PRO_1000192426" description="Transcription antitermination protein NusB">
    <location>
        <begin position="1"/>
        <end position="143"/>
    </location>
</feature>
<sequence length="143" mass="16725">MNRRKSREVAMRLLFQTTLNGENLEEALENLKDVRESEEITKEKDYESVDLKDVDIDYVKRIIKGIEENKEEIDEKIKGNLKNWKIERLSKVDLSILRLCTYELKFEEDIPNRVSINEAIELAKKYSGEKSATFINGVLGKMI</sequence>
<accession>C1FPB3</accession>
<evidence type="ECO:0000255" key="1">
    <source>
        <dbReference type="HAMAP-Rule" id="MF_00073"/>
    </source>
</evidence>
<protein>
    <recommendedName>
        <fullName evidence="1">Transcription antitermination protein NusB</fullName>
    </recommendedName>
    <alternativeName>
        <fullName evidence="1">Antitermination factor NusB</fullName>
    </alternativeName>
</protein>
<organism>
    <name type="scientific">Clostridium botulinum (strain Kyoto / Type A2)</name>
    <dbReference type="NCBI Taxonomy" id="536232"/>
    <lineage>
        <taxon>Bacteria</taxon>
        <taxon>Bacillati</taxon>
        <taxon>Bacillota</taxon>
        <taxon>Clostridia</taxon>
        <taxon>Eubacteriales</taxon>
        <taxon>Clostridiaceae</taxon>
        <taxon>Clostridium</taxon>
    </lineage>
</organism>
<proteinExistence type="inferred from homology"/>
<dbReference type="EMBL" id="CP001581">
    <property type="protein sequence ID" value="ACO87204.1"/>
    <property type="molecule type" value="Genomic_DNA"/>
</dbReference>
<dbReference type="RefSeq" id="WP_012705735.1">
    <property type="nucleotide sequence ID" value="NC_012563.1"/>
</dbReference>
<dbReference type="SMR" id="C1FPB3"/>
<dbReference type="KEGG" id="cby:CLM_2103"/>
<dbReference type="eggNOG" id="COG0781">
    <property type="taxonomic scope" value="Bacteria"/>
</dbReference>
<dbReference type="HOGENOM" id="CLU_087843_3_1_9"/>
<dbReference type="Proteomes" id="UP000001374">
    <property type="component" value="Chromosome"/>
</dbReference>
<dbReference type="GO" id="GO:0005829">
    <property type="term" value="C:cytosol"/>
    <property type="evidence" value="ECO:0007669"/>
    <property type="project" value="TreeGrafter"/>
</dbReference>
<dbReference type="GO" id="GO:0003723">
    <property type="term" value="F:RNA binding"/>
    <property type="evidence" value="ECO:0007669"/>
    <property type="project" value="UniProtKB-UniRule"/>
</dbReference>
<dbReference type="GO" id="GO:0006353">
    <property type="term" value="P:DNA-templated transcription termination"/>
    <property type="evidence" value="ECO:0007669"/>
    <property type="project" value="UniProtKB-UniRule"/>
</dbReference>
<dbReference type="GO" id="GO:0031564">
    <property type="term" value="P:transcription antitermination"/>
    <property type="evidence" value="ECO:0007669"/>
    <property type="project" value="UniProtKB-KW"/>
</dbReference>
<dbReference type="FunFam" id="1.10.940.10:FF:000003">
    <property type="entry name" value="Transcription antitermination factor NusB"/>
    <property type="match status" value="1"/>
</dbReference>
<dbReference type="Gene3D" id="1.10.940.10">
    <property type="entry name" value="NusB-like"/>
    <property type="match status" value="1"/>
</dbReference>
<dbReference type="HAMAP" id="MF_00073">
    <property type="entry name" value="NusB"/>
    <property type="match status" value="1"/>
</dbReference>
<dbReference type="InterPro" id="IPR035926">
    <property type="entry name" value="NusB-like_sf"/>
</dbReference>
<dbReference type="InterPro" id="IPR011605">
    <property type="entry name" value="NusB_fam"/>
</dbReference>
<dbReference type="InterPro" id="IPR006027">
    <property type="entry name" value="NusB_RsmB_TIM44"/>
</dbReference>
<dbReference type="NCBIfam" id="TIGR01951">
    <property type="entry name" value="nusB"/>
    <property type="match status" value="1"/>
</dbReference>
<dbReference type="PANTHER" id="PTHR11078:SF3">
    <property type="entry name" value="ANTITERMINATION NUSB DOMAIN-CONTAINING PROTEIN"/>
    <property type="match status" value="1"/>
</dbReference>
<dbReference type="PANTHER" id="PTHR11078">
    <property type="entry name" value="N UTILIZATION SUBSTANCE PROTEIN B-RELATED"/>
    <property type="match status" value="1"/>
</dbReference>
<dbReference type="Pfam" id="PF01029">
    <property type="entry name" value="NusB"/>
    <property type="match status" value="1"/>
</dbReference>
<dbReference type="SUPFAM" id="SSF48013">
    <property type="entry name" value="NusB-like"/>
    <property type="match status" value="1"/>
</dbReference>
<reference key="1">
    <citation type="submission" date="2008-10" db="EMBL/GenBank/DDBJ databases">
        <title>Genome sequence of Clostridium botulinum A2 Kyoto.</title>
        <authorList>
            <person name="Shrivastava S."/>
            <person name="Brinkac L.M."/>
            <person name="Brown J.L."/>
            <person name="Bruce D."/>
            <person name="Detter C.C."/>
            <person name="Johnson E.A."/>
            <person name="Munk C.A."/>
            <person name="Smith L.A."/>
            <person name="Smith T.J."/>
            <person name="Sutton G."/>
            <person name="Brettin T.S."/>
        </authorList>
    </citation>
    <scope>NUCLEOTIDE SEQUENCE [LARGE SCALE GENOMIC DNA]</scope>
    <source>
        <strain>Kyoto / Type A2</strain>
    </source>
</reference>
<name>NUSB_CLOBJ</name>